<reference key="1">
    <citation type="journal article" date="2001" name="Yeast">
        <title>Sequencing of a 4.3 kbp region of chromosome 2 of Candida albicans reveals the presence of homologues of SHE9 from Saccharomyces cerevisiae and of bacterial phosphatidylinositol-phospholipase C.</title>
        <authorList>
            <person name="Andaluz E."/>
            <person name="Coque J.J."/>
            <person name="Cueva R."/>
            <person name="Larriba G."/>
        </authorList>
    </citation>
    <scope>NUCLEOTIDE SEQUENCE [GENOMIC DNA]</scope>
</reference>
<reference key="2">
    <citation type="journal article" date="2004" name="Proc. Natl. Acad. Sci. U.S.A.">
        <title>The diploid genome sequence of Candida albicans.</title>
        <authorList>
            <person name="Jones T."/>
            <person name="Federspiel N.A."/>
            <person name="Chibana H."/>
            <person name="Dungan J."/>
            <person name="Kalman S."/>
            <person name="Magee B.B."/>
            <person name="Newport G."/>
            <person name="Thorstenson Y.R."/>
            <person name="Agabian N."/>
            <person name="Magee P.T."/>
            <person name="Davis R.W."/>
            <person name="Scherer S."/>
        </authorList>
    </citation>
    <scope>NUCLEOTIDE SEQUENCE [LARGE SCALE GENOMIC DNA]</scope>
    <source>
        <strain>SC5314 / ATCC MYA-2876</strain>
    </source>
</reference>
<reference key="3">
    <citation type="journal article" date="2007" name="Genome Biol.">
        <title>Assembly of the Candida albicans genome into sixteen supercontigs aligned on the eight chromosomes.</title>
        <authorList>
            <person name="van het Hoog M."/>
            <person name="Rast T.J."/>
            <person name="Martchenko M."/>
            <person name="Grindle S."/>
            <person name="Dignard D."/>
            <person name="Hogues H."/>
            <person name="Cuomo C."/>
            <person name="Berriman M."/>
            <person name="Scherer S."/>
            <person name="Magee B.B."/>
            <person name="Whiteway M."/>
            <person name="Chibana H."/>
            <person name="Nantel A."/>
            <person name="Magee P.T."/>
        </authorList>
    </citation>
    <scope>GENOME REANNOTATION</scope>
    <source>
        <strain>SC5314 / ATCC MYA-2876</strain>
    </source>
</reference>
<reference key="4">
    <citation type="journal article" date="2013" name="Genome Biol.">
        <title>Assembly of a phased diploid Candida albicans genome facilitates allele-specific measurements and provides a simple model for repeat and indel structure.</title>
        <authorList>
            <person name="Muzzey D."/>
            <person name="Schwartz K."/>
            <person name="Weissman J.S."/>
            <person name="Sherlock G."/>
        </authorList>
    </citation>
    <scope>NUCLEOTIDE SEQUENCE [LARGE SCALE GENOMIC DNA]</scope>
    <scope>GENOME REANNOTATION</scope>
    <source>
        <strain>SC5314 / ATCC MYA-2876</strain>
    </source>
</reference>
<gene>
    <name type="primary">SHE9</name>
    <name type="ordered locus">CAALFM_C203050WA</name>
    <name type="ORF">CaO19.13218</name>
    <name type="ORF">CaO19.5796</name>
</gene>
<sequence>MNLFVALSKKKKYQHKLFAPYLRPSTDTTTTETRFMLSTCLIRNCVFIRPRLSVICFKAIRYQSKKSDFPDYTKINDPKLREIIEGSNFGTEAILKKQREDQDKKKKMEQERKRLEQEREVDRRREEKRAKEESESNKTDNDNEANQHTDDKLAKVNEKLESNFSKTESGKLRGEDTGTRETVVETEEEEELKLKAENKIIATSKDSVDESDIPNLAKEINETIQKEIAGLPSQKAKNQSKLAKNLTKYLDSAHDTILTATRALNDVTGYSAIEKLKKSIETQEDDLKKAKEKVKQCKIAYGEAIQRRSHSQREVNELLTRKHNWSSNDLERFTELYRNDHENEIHEQEAEKKLDEAESKVDGVQLKLTQSILTRYHEEQIWSDKIRRSSTWGTWVLMGLNVLLFVVATFIVEPWKRSKLVSAFEDKVKQVLVGISQENEQILDPIIEKLEPTDGQVPIKTSFDFKFVTNTWHGLKAALVRNYEALMSPEITNLEFDKFEFELFTMTVAIVAFSMGSLIVSLFK</sequence>
<accession>Q5A0L7</accession>
<accession>A0A1D8PGS0</accession>
<accession>Q9P865</accession>
<comment type="function">
    <text evidence="1">Required for the maintenance of the structure of the mitochondrial inner membrane. Involved in mitochondrial morphology. Causes growth arrest when highly overexpressed (By similarity).</text>
</comment>
<comment type="subunit">
    <text evidence="1">Homooligomer.</text>
</comment>
<comment type="subcellular location">
    <subcellularLocation>
        <location evidence="1">Mitochondrion inner membrane</location>
        <topology evidence="1">Multi-pass membrane protein</topology>
    </subcellularLocation>
</comment>
<comment type="similarity">
    <text evidence="4">Belongs to the SHE9 family.</text>
</comment>
<dbReference type="EMBL" id="AJ277539">
    <property type="protein sequence ID" value="CAB92912.1"/>
    <property type="molecule type" value="Genomic_DNA"/>
</dbReference>
<dbReference type="EMBL" id="CP017624">
    <property type="protein sequence ID" value="AOW27342.1"/>
    <property type="molecule type" value="Genomic_DNA"/>
</dbReference>
<dbReference type="RefSeq" id="XP_715337.1">
    <property type="nucleotide sequence ID" value="XM_710244.2"/>
</dbReference>
<dbReference type="SMR" id="Q5A0L7"/>
<dbReference type="FunCoup" id="Q5A0L7">
    <property type="interactions" value="52"/>
</dbReference>
<dbReference type="STRING" id="237561.Q5A0L7"/>
<dbReference type="EnsemblFungi" id="C2_03050W_A-T">
    <property type="protein sequence ID" value="C2_03050W_A-T-p1"/>
    <property type="gene ID" value="C2_03050W_A"/>
</dbReference>
<dbReference type="GeneID" id="3642984"/>
<dbReference type="KEGG" id="cal:CAALFM_C203050WA"/>
<dbReference type="CGD" id="CAL0000193129">
    <property type="gene designation" value="SHE9"/>
</dbReference>
<dbReference type="VEuPathDB" id="FungiDB:C2_03050W_A"/>
<dbReference type="eggNOG" id="ENOG502QQ1E">
    <property type="taxonomic scope" value="Eukaryota"/>
</dbReference>
<dbReference type="HOGENOM" id="CLU_025632_5_0_1"/>
<dbReference type="InParanoid" id="Q5A0L7"/>
<dbReference type="OrthoDB" id="5595506at2759"/>
<dbReference type="PRO" id="PR:Q5A0L7"/>
<dbReference type="Proteomes" id="UP000000559">
    <property type="component" value="Chromosome 2"/>
</dbReference>
<dbReference type="GO" id="GO:0005743">
    <property type="term" value="C:mitochondrial inner membrane"/>
    <property type="evidence" value="ECO:0000318"/>
    <property type="project" value="GO_Central"/>
</dbReference>
<dbReference type="GO" id="GO:0007007">
    <property type="term" value="P:inner mitochondrial membrane organization"/>
    <property type="evidence" value="ECO:0000318"/>
    <property type="project" value="GO_Central"/>
</dbReference>
<dbReference type="InterPro" id="IPR008839">
    <property type="entry name" value="MDM33_fungi"/>
</dbReference>
<dbReference type="PANTHER" id="PTHR31961">
    <property type="entry name" value="SENSITIVE TO HIGH EXPRESSION PROTEIN 9, MITOCHONDRIAL"/>
    <property type="match status" value="1"/>
</dbReference>
<dbReference type="PANTHER" id="PTHR31961:SF3">
    <property type="entry name" value="SENSITIVE TO HIGH EXPRESSION PROTEIN 9, MITOCHONDRIAL"/>
    <property type="match status" value="1"/>
</dbReference>
<dbReference type="Pfam" id="PF05546">
    <property type="entry name" value="She9_MDM33"/>
    <property type="match status" value="1"/>
</dbReference>
<organism>
    <name type="scientific">Candida albicans (strain SC5314 / ATCC MYA-2876)</name>
    <name type="common">Yeast</name>
    <dbReference type="NCBI Taxonomy" id="237561"/>
    <lineage>
        <taxon>Eukaryota</taxon>
        <taxon>Fungi</taxon>
        <taxon>Dikarya</taxon>
        <taxon>Ascomycota</taxon>
        <taxon>Saccharomycotina</taxon>
        <taxon>Pichiomycetes</taxon>
        <taxon>Debaryomycetaceae</taxon>
        <taxon>Candida/Lodderomyces clade</taxon>
        <taxon>Candida</taxon>
    </lineage>
</organism>
<keyword id="KW-0175">Coiled coil</keyword>
<keyword id="KW-0472">Membrane</keyword>
<keyword id="KW-0496">Mitochondrion</keyword>
<keyword id="KW-0999">Mitochondrion inner membrane</keyword>
<keyword id="KW-1185">Reference proteome</keyword>
<keyword id="KW-0809">Transit peptide</keyword>
<keyword id="KW-0812">Transmembrane</keyword>
<keyword id="KW-1133">Transmembrane helix</keyword>
<feature type="transit peptide" description="Mitochondrion" evidence="2">
    <location>
        <begin position="1"/>
        <end status="unknown"/>
    </location>
</feature>
<feature type="chain" id="PRO_0000351052" description="Sensitive to high expression protein 9 homolog, mitochondrial">
    <location>
        <begin status="unknown"/>
        <end position="524"/>
    </location>
</feature>
<feature type="topological domain" description="Mitochondrial matrix" evidence="2">
    <location>
        <begin status="unknown"/>
        <end position="391"/>
    </location>
</feature>
<feature type="transmembrane region" description="Helical" evidence="2">
    <location>
        <begin position="392"/>
        <end position="412"/>
    </location>
</feature>
<feature type="topological domain" description="Mitochondrial intermembrane" evidence="2">
    <location>
        <begin position="413"/>
        <end position="502"/>
    </location>
</feature>
<feature type="transmembrane region" description="Helical" evidence="2">
    <location>
        <begin position="503"/>
        <end position="523"/>
    </location>
</feature>
<feature type="topological domain" description="Mitochondrial matrix" evidence="2">
    <location>
        <position position="524"/>
    </location>
</feature>
<feature type="region of interest" description="Disordered" evidence="3">
    <location>
        <begin position="94"/>
        <end position="190"/>
    </location>
</feature>
<feature type="coiled-coil region" evidence="2">
    <location>
        <begin position="92"/>
        <end position="133"/>
    </location>
</feature>
<feature type="coiled-coil region" evidence="2">
    <location>
        <begin position="270"/>
        <end position="304"/>
    </location>
</feature>
<feature type="coiled-coil region" evidence="2">
    <location>
        <begin position="338"/>
        <end position="371"/>
    </location>
</feature>
<feature type="compositionally biased region" description="Basic and acidic residues" evidence="3">
    <location>
        <begin position="94"/>
        <end position="161"/>
    </location>
</feature>
<feature type="compositionally biased region" description="Basic and acidic residues" evidence="3">
    <location>
        <begin position="168"/>
        <end position="183"/>
    </location>
</feature>
<feature type="sequence conflict" description="In Ref. 1; CAB92912." evidence="4" ref="1">
    <original>A</original>
    <variation>P</variation>
    <location>
        <position position="19"/>
    </location>
</feature>
<feature type="sequence conflict" description="In Ref. 1; CAB92912." evidence="4" ref="1">
    <original>E</original>
    <variation>Q</variation>
    <location>
        <position position="227"/>
    </location>
</feature>
<feature type="sequence conflict" description="In Ref. 1; CAB92912." evidence="4" ref="1">
    <original>Q</original>
    <variation>L</variation>
    <location>
        <position position="306"/>
    </location>
</feature>
<evidence type="ECO:0000250" key="1"/>
<evidence type="ECO:0000255" key="2"/>
<evidence type="ECO:0000256" key="3">
    <source>
        <dbReference type="SAM" id="MobiDB-lite"/>
    </source>
</evidence>
<evidence type="ECO:0000305" key="4"/>
<protein>
    <recommendedName>
        <fullName>Sensitive to high expression protein 9 homolog, mitochondrial</fullName>
    </recommendedName>
</protein>
<proteinExistence type="inferred from homology"/>
<name>SHE9_CANAL</name>